<protein>
    <recommendedName>
        <fullName evidence="1">1,4-dihydroxy-2-naphthoyl-CoA synthase</fullName>
        <shortName evidence="1">DHNA-CoA synthase</shortName>
        <ecNumber evidence="1">4.1.3.36</ecNumber>
    </recommendedName>
</protein>
<feature type="chain" id="PRO_0000427091" description="1,4-dihydroxy-2-naphthoyl-CoA synthase">
    <location>
        <begin position="1"/>
        <end position="314"/>
    </location>
</feature>
<feature type="binding site" description="in other chain" evidence="1">
    <location>
        <position position="58"/>
    </location>
    <ligand>
        <name>substrate</name>
        <note>ligand shared between two neighboring subunits</note>
    </ligand>
</feature>
<feature type="binding site" description="in other chain" evidence="1">
    <location>
        <begin position="103"/>
        <end position="107"/>
    </location>
    <ligand>
        <name>substrate</name>
        <note>ligand shared between two neighboring subunits</note>
    </ligand>
</feature>
<feature type="binding site" description="in other chain" evidence="1">
    <location>
        <position position="115"/>
    </location>
    <ligand>
        <name>substrate</name>
        <note>ligand shared between two neighboring subunits</note>
    </ligand>
</feature>
<feature type="binding site" description="in other chain" evidence="1">
    <location>
        <begin position="157"/>
        <end position="161"/>
    </location>
    <ligand>
        <name>substrate</name>
        <note>ligand shared between two neighboring subunits</note>
    </ligand>
</feature>
<feature type="binding site" description="in other chain" evidence="1">
    <location>
        <position position="184"/>
    </location>
    <ligand>
        <name>substrate</name>
        <note>ligand shared between two neighboring subunits</note>
    </ligand>
</feature>
<feature type="binding site" description="in other chain" evidence="1">
    <location>
        <position position="190"/>
    </location>
    <ligand>
        <name>substrate</name>
        <note>ligand shared between two neighboring subunits</note>
    </ligand>
</feature>
<feature type="binding site" evidence="1">
    <location>
        <position position="287"/>
    </location>
    <ligand>
        <name>substrate</name>
        <note>ligand shared between two neighboring subunits</note>
    </ligand>
</feature>
<feature type="binding site" evidence="1">
    <location>
        <position position="302"/>
    </location>
    <ligand>
        <name>substrate</name>
        <note>ligand shared between two neighboring subunits</note>
    </ligand>
</feature>
<feature type="site" description="Important for catalysis" evidence="1">
    <location>
        <position position="115"/>
    </location>
</feature>
<feature type="site" description="Important for catalysis" evidence="1">
    <location>
        <position position="185"/>
    </location>
</feature>
<feature type="site" description="Important for catalysis" evidence="1">
    <location>
        <position position="287"/>
    </location>
</feature>
<evidence type="ECO:0000255" key="1">
    <source>
        <dbReference type="HAMAP-Rule" id="MF_01934"/>
    </source>
</evidence>
<keyword id="KW-0456">Lyase</keyword>
<keyword id="KW-0474">Menaquinone biosynthesis</keyword>
<keyword id="KW-1185">Reference proteome</keyword>
<accession>P9WNP4</accession>
<accession>L0T442</accession>
<accession>O06414</accession>
<accession>Q7D9N7</accession>
<reference key="1">
    <citation type="journal article" date="2002" name="J. Bacteriol.">
        <title>Whole-genome comparison of Mycobacterium tuberculosis clinical and laboratory strains.</title>
        <authorList>
            <person name="Fleischmann R.D."/>
            <person name="Alland D."/>
            <person name="Eisen J.A."/>
            <person name="Carpenter L."/>
            <person name="White O."/>
            <person name="Peterson J.D."/>
            <person name="DeBoy R.T."/>
            <person name="Dodson R.J."/>
            <person name="Gwinn M.L."/>
            <person name="Haft D.H."/>
            <person name="Hickey E.K."/>
            <person name="Kolonay J.F."/>
            <person name="Nelson W.C."/>
            <person name="Umayam L.A."/>
            <person name="Ermolaeva M.D."/>
            <person name="Salzberg S.L."/>
            <person name="Delcher A."/>
            <person name="Utterback T.R."/>
            <person name="Weidman J.F."/>
            <person name="Khouri H.M."/>
            <person name="Gill J."/>
            <person name="Mikula A."/>
            <person name="Bishai W."/>
            <person name="Jacobs W.R. Jr."/>
            <person name="Venter J.C."/>
            <person name="Fraser C.M."/>
        </authorList>
    </citation>
    <scope>NUCLEOTIDE SEQUENCE [LARGE SCALE GENOMIC DNA]</scope>
    <source>
        <strain>CDC 1551 / Oshkosh</strain>
    </source>
</reference>
<comment type="function">
    <text evidence="1">Converts o-succinylbenzoyl-CoA (OSB-CoA) to 1,4-dihydroxy-2-naphthoyl-CoA (DHNA-CoA).</text>
</comment>
<comment type="catalytic activity">
    <reaction evidence="1">
        <text>2-succinylbenzoyl-CoA + H(+) = 1,4-dihydroxy-2-naphthoyl-CoA + H2O</text>
        <dbReference type="Rhea" id="RHEA:26562"/>
        <dbReference type="ChEBI" id="CHEBI:15377"/>
        <dbReference type="ChEBI" id="CHEBI:15378"/>
        <dbReference type="ChEBI" id="CHEBI:57364"/>
        <dbReference type="ChEBI" id="CHEBI:58897"/>
        <dbReference type="EC" id="4.1.3.36"/>
    </reaction>
</comment>
<comment type="pathway">
    <text evidence="1">Quinol/quinone metabolism; 1,4-dihydroxy-2-naphthoate biosynthesis; 1,4-dihydroxy-2-naphthoate from chorismate: step 6/7.</text>
</comment>
<comment type="pathway">
    <text evidence="1">Quinol/quinone metabolism; menaquinone biosynthesis.</text>
</comment>
<comment type="similarity">
    <text evidence="1">Belongs to the enoyl-CoA hydratase/isomerase family. MenB subfamily.</text>
</comment>
<gene>
    <name evidence="1" type="primary">menB</name>
    <name type="ordered locus">MT0573</name>
</gene>
<organism>
    <name type="scientific">Mycobacterium tuberculosis (strain CDC 1551 / Oshkosh)</name>
    <dbReference type="NCBI Taxonomy" id="83331"/>
    <lineage>
        <taxon>Bacteria</taxon>
        <taxon>Bacillati</taxon>
        <taxon>Actinomycetota</taxon>
        <taxon>Actinomycetes</taxon>
        <taxon>Mycobacteriales</taxon>
        <taxon>Mycobacteriaceae</taxon>
        <taxon>Mycobacterium</taxon>
        <taxon>Mycobacterium tuberculosis complex</taxon>
    </lineage>
</organism>
<name>MENB_MYCTO</name>
<sequence length="314" mass="34689">MVAPAGEQGRSSTALSDNPFDAKAWRLVDGFDDLTDITYHRHVDDATVRVAFNRPEVRNAFRPHTVDELYRVLDHARMSPDVGVVLLTGNGPSPKDGGWAFCSGGDQRIRGRSGYQYASGDTADTVDVARAGRLHILEVQRLIRFMPKVVICLVNGWAAGGGHSLHVVCDLTLASREYARFKQTDADVGSFDGGYGSAYLARQVGQKFAREIFFLGRTYTAEQMHQMGAVNAVAEHAELETVGLQWAAEINAKSPQAQRMLKFAFNLLDDGLVGQQLFAGEATRLAYMTDEAVEGRDAFLQKRPPDWSPFPRYF</sequence>
<proteinExistence type="inferred from homology"/>
<dbReference type="EC" id="4.1.3.36" evidence="1"/>
<dbReference type="EMBL" id="AE000516">
    <property type="protein sequence ID" value="AAK44795.1"/>
    <property type="molecule type" value="Genomic_DNA"/>
</dbReference>
<dbReference type="PIR" id="G70547">
    <property type="entry name" value="G70547"/>
</dbReference>
<dbReference type="SMR" id="P9WNP4"/>
<dbReference type="KEGG" id="mtc:MT0573"/>
<dbReference type="PATRIC" id="fig|83331.31.peg.604"/>
<dbReference type="HOGENOM" id="CLU_009834_7_7_11"/>
<dbReference type="UniPathway" id="UPA00079"/>
<dbReference type="UniPathway" id="UPA01057">
    <property type="reaction ID" value="UER00167"/>
</dbReference>
<dbReference type="Proteomes" id="UP000001020">
    <property type="component" value="Chromosome"/>
</dbReference>
<dbReference type="GO" id="GO:0008935">
    <property type="term" value="F:1,4-dihydroxy-2-naphthoyl-CoA synthase activity"/>
    <property type="evidence" value="ECO:0007669"/>
    <property type="project" value="UniProtKB-UniRule"/>
</dbReference>
<dbReference type="GO" id="GO:0009234">
    <property type="term" value="P:menaquinone biosynthetic process"/>
    <property type="evidence" value="ECO:0007669"/>
    <property type="project" value="UniProtKB-UniRule"/>
</dbReference>
<dbReference type="CDD" id="cd06558">
    <property type="entry name" value="crotonase-like"/>
    <property type="match status" value="1"/>
</dbReference>
<dbReference type="FunFam" id="1.10.12.10:FF:000003">
    <property type="entry name" value="1,4-dihydroxy-2-naphthoyl-CoA synthase"/>
    <property type="match status" value="1"/>
</dbReference>
<dbReference type="FunFam" id="3.90.226.10:FF:000003">
    <property type="entry name" value="1,4-dihydroxy-2-naphthoyl-CoA synthase"/>
    <property type="match status" value="1"/>
</dbReference>
<dbReference type="Gene3D" id="3.90.226.10">
    <property type="entry name" value="2-enoyl-CoA Hydratase, Chain A, domain 1"/>
    <property type="match status" value="1"/>
</dbReference>
<dbReference type="Gene3D" id="1.10.12.10">
    <property type="entry name" value="Lyase 2-enoyl-coa Hydratase, Chain A, domain 2"/>
    <property type="match status" value="1"/>
</dbReference>
<dbReference type="HAMAP" id="MF_01934">
    <property type="entry name" value="MenB"/>
    <property type="match status" value="1"/>
</dbReference>
<dbReference type="InterPro" id="IPR029045">
    <property type="entry name" value="ClpP/crotonase-like_dom_sf"/>
</dbReference>
<dbReference type="InterPro" id="IPR010198">
    <property type="entry name" value="DHNA-CoA_synthase_MenB"/>
</dbReference>
<dbReference type="InterPro" id="IPR001753">
    <property type="entry name" value="Enoyl-CoA_hydra/iso"/>
</dbReference>
<dbReference type="InterPro" id="IPR014748">
    <property type="entry name" value="Enoyl-CoA_hydra_C"/>
</dbReference>
<dbReference type="NCBIfam" id="TIGR01929">
    <property type="entry name" value="menB"/>
    <property type="match status" value="1"/>
</dbReference>
<dbReference type="NCBIfam" id="NF006186">
    <property type="entry name" value="PRK08321.1"/>
    <property type="match status" value="1"/>
</dbReference>
<dbReference type="PANTHER" id="PTHR43113:SF1">
    <property type="entry name" value="1,4-DIHYDROXY-2-NAPHTHOYL-COA SYNTHASE, PEROXISOMAL"/>
    <property type="match status" value="1"/>
</dbReference>
<dbReference type="PANTHER" id="PTHR43113">
    <property type="entry name" value="NUCLEOSIDE-DIPHOSPHATE-SUGAR EPIMERASE"/>
    <property type="match status" value="1"/>
</dbReference>
<dbReference type="Pfam" id="PF00378">
    <property type="entry name" value="ECH_1"/>
    <property type="match status" value="1"/>
</dbReference>
<dbReference type="SUPFAM" id="SSF52096">
    <property type="entry name" value="ClpP/crotonase"/>
    <property type="match status" value="1"/>
</dbReference>